<evidence type="ECO:0000250" key="1"/>
<evidence type="ECO:0000269" key="2">
    <source>
    </source>
</evidence>
<evidence type="ECO:0000269" key="3">
    <source>
    </source>
</evidence>
<evidence type="ECO:0000269" key="4">
    <source>
    </source>
</evidence>
<evidence type="ECO:0000269" key="5">
    <source>
    </source>
</evidence>
<evidence type="ECO:0000269" key="6">
    <source>
    </source>
</evidence>
<evidence type="ECO:0000269" key="7">
    <source>
    </source>
</evidence>
<evidence type="ECO:0000305" key="8"/>
<proteinExistence type="evidence at protein level"/>
<organism>
    <name type="scientific">Escherichia coli (strain K12)</name>
    <dbReference type="NCBI Taxonomy" id="83333"/>
    <lineage>
        <taxon>Bacteria</taxon>
        <taxon>Pseudomonadati</taxon>
        <taxon>Pseudomonadota</taxon>
        <taxon>Gammaproteobacteria</taxon>
        <taxon>Enterobacterales</taxon>
        <taxon>Enterobacteriaceae</taxon>
        <taxon>Escherichia</taxon>
    </lineage>
</organism>
<sequence length="266" mass="29175">MTEPLTETPELSAKYAWFFDLDGTLAEIKPHPDQVVVPDNILQGLQLLATASDGALALISGRSMVELDALAKPYRFPLAGVHGAERRDINGKTHIVHLPDAIARDISVQLHTVIAQYPGAELEAKGMAFALHYRQAPQHEDALMTLAQRITQIWPQMALQQGKCVVEIKPRGTSKGEAIAAFMQEAPFIGRTPVFLGDDLTDESGFAVVNRLGGMSVKIGTGATQASWRLAGVPDVWSWLEMITTALQQKRENNRSDDYESFSRSI</sequence>
<feature type="chain" id="PRO_0000058100" description="Trehalose-6-phosphate phosphatase">
    <location>
        <begin position="1"/>
        <end position="266"/>
    </location>
</feature>
<feature type="active site" description="Nucleophile" evidence="1">
    <location>
        <position position="20"/>
    </location>
</feature>
<feature type="binding site" evidence="1">
    <location>
        <begin position="20"/>
        <end position="22"/>
    </location>
    <ligand>
        <name>substrate</name>
    </ligand>
</feature>
<feature type="binding site" evidence="1">
    <location>
        <position position="20"/>
    </location>
    <ligand>
        <name>Mg(2+)</name>
        <dbReference type="ChEBI" id="CHEBI:18420"/>
    </ligand>
</feature>
<feature type="binding site" evidence="1">
    <location>
        <position position="22"/>
    </location>
    <ligand>
        <name>Mg(2+)</name>
        <dbReference type="ChEBI" id="CHEBI:18420"/>
    </ligand>
</feature>
<feature type="binding site" evidence="1">
    <location>
        <position position="198"/>
    </location>
    <ligand>
        <name>Mg(2+)</name>
        <dbReference type="ChEBI" id="CHEBI:18420"/>
    </ligand>
</feature>
<accession>P31678</accession>
<comment type="function">
    <text evidence="3 4">Removes the phosphate from trehalose 6-phosphate (Tre6P) to produce free trehalose. Also catalyzes the dephosphorylation of glucose-6-phosphate (Glu6P) and 2-deoxyglucose-6-phosphate (2dGlu6P).</text>
</comment>
<comment type="catalytic activity">
    <reaction evidence="4">
        <text>alpha,alpha-trehalose 6-phosphate + H2O = alpha,alpha-trehalose + phosphate</text>
        <dbReference type="Rhea" id="RHEA:23420"/>
        <dbReference type="ChEBI" id="CHEBI:15377"/>
        <dbReference type="ChEBI" id="CHEBI:16551"/>
        <dbReference type="ChEBI" id="CHEBI:43474"/>
        <dbReference type="ChEBI" id="CHEBI:58429"/>
        <dbReference type="EC" id="3.1.3.12"/>
    </reaction>
    <physiologicalReaction direction="left-to-right" evidence="4">
        <dbReference type="Rhea" id="RHEA:23421"/>
    </physiologicalReaction>
</comment>
<comment type="cofactor">
    <cofactor evidence="4">
        <name>Mg(2+)</name>
        <dbReference type="ChEBI" id="CHEBI:18420"/>
    </cofactor>
    <cofactor evidence="4">
        <name>Mn(2+)</name>
        <dbReference type="ChEBI" id="CHEBI:29035"/>
    </cofactor>
    <cofactor evidence="4">
        <name>Co(2+)</name>
        <dbReference type="ChEBI" id="CHEBI:48828"/>
    </cofactor>
    <cofactor evidence="4">
        <name>Zn(2+)</name>
        <dbReference type="ChEBI" id="CHEBI:29105"/>
    </cofactor>
    <text evidence="4">Magnesium. Can also use other divalent metal cations as manganese, cobalt or zinc.</text>
</comment>
<comment type="biophysicochemical properties">
    <kinetics>
        <KM evidence="4">0.61 mM for Tre6P (with magnesium ions as cofactor and at pH 9)</KM>
    </kinetics>
    <phDependence>
        <text evidence="4">Optimum pH is between 6 and 7.5.</text>
    </phDependence>
</comment>
<comment type="pathway">
    <text>Glycan biosynthesis; trehalose biosynthesis.</text>
</comment>
<comment type="induction">
    <text evidence="2 3 5 6 7">By cold-shock, osmotic-shock and during the transition to stationary phase. Expression is partially dependent on RpoS.</text>
</comment>
<comment type="similarity">
    <text evidence="8">Belongs to the trehalose phosphatase family.</text>
</comment>
<dbReference type="EC" id="3.1.3.12" evidence="4"/>
<dbReference type="EMBL" id="X69160">
    <property type="protein sequence ID" value="CAA48912.1"/>
    <property type="molecule type" value="Genomic_DNA"/>
</dbReference>
<dbReference type="EMBL" id="U00096">
    <property type="protein sequence ID" value="AAC74967.1"/>
    <property type="molecule type" value="Genomic_DNA"/>
</dbReference>
<dbReference type="EMBL" id="AP009048">
    <property type="protein sequence ID" value="BAA15718.1"/>
    <property type="molecule type" value="Genomic_DNA"/>
</dbReference>
<dbReference type="PIR" id="I83401">
    <property type="entry name" value="I83401"/>
</dbReference>
<dbReference type="RefSeq" id="NP_416411.1">
    <property type="nucleotide sequence ID" value="NC_000913.3"/>
</dbReference>
<dbReference type="RefSeq" id="WP_001295645.1">
    <property type="nucleotide sequence ID" value="NZ_SSZK01000001.1"/>
</dbReference>
<dbReference type="SMR" id="P31678"/>
<dbReference type="BioGRID" id="4262243">
    <property type="interactions" value="31"/>
</dbReference>
<dbReference type="FunCoup" id="P31678">
    <property type="interactions" value="119"/>
</dbReference>
<dbReference type="IntAct" id="P31678">
    <property type="interactions" value="15"/>
</dbReference>
<dbReference type="STRING" id="511145.b1897"/>
<dbReference type="jPOST" id="P31678"/>
<dbReference type="PaxDb" id="511145-b1897"/>
<dbReference type="DNASU" id="946406"/>
<dbReference type="EnsemblBacteria" id="AAC74967">
    <property type="protein sequence ID" value="AAC74967"/>
    <property type="gene ID" value="b1897"/>
</dbReference>
<dbReference type="GeneID" id="93776200"/>
<dbReference type="GeneID" id="946406"/>
<dbReference type="KEGG" id="ecj:JW1886"/>
<dbReference type="KEGG" id="eco:b1897"/>
<dbReference type="KEGG" id="ecoc:C3026_10775"/>
<dbReference type="PATRIC" id="fig|1411691.4.peg.352"/>
<dbReference type="EchoBASE" id="EB1702"/>
<dbReference type="eggNOG" id="COG1877">
    <property type="taxonomic scope" value="Bacteria"/>
</dbReference>
<dbReference type="HOGENOM" id="CLU_037265_2_0_6"/>
<dbReference type="InParanoid" id="P31678"/>
<dbReference type="OMA" id="PTPREVW"/>
<dbReference type="OrthoDB" id="9814913at2"/>
<dbReference type="PhylomeDB" id="P31678"/>
<dbReference type="BioCyc" id="EcoCyc:TREHALOSEPHOSPHASYN-MONOMER"/>
<dbReference type="BioCyc" id="MetaCyc:TREHALOSEPHOSPHASYN-MONOMER"/>
<dbReference type="BRENDA" id="3.1.3.12">
    <property type="organism ID" value="2026"/>
</dbReference>
<dbReference type="UniPathway" id="UPA00299"/>
<dbReference type="PRO" id="PR:P31678"/>
<dbReference type="Proteomes" id="UP000000625">
    <property type="component" value="Chromosome"/>
</dbReference>
<dbReference type="GO" id="GO:0000287">
    <property type="term" value="F:magnesium ion binding"/>
    <property type="evidence" value="ECO:0000314"/>
    <property type="project" value="UniProtKB"/>
</dbReference>
<dbReference type="GO" id="GO:0004805">
    <property type="term" value="F:trehalose-phosphatase activity"/>
    <property type="evidence" value="ECO:0000314"/>
    <property type="project" value="EcoCyc"/>
</dbReference>
<dbReference type="GO" id="GO:0006970">
    <property type="term" value="P:response to osmotic stress"/>
    <property type="evidence" value="ECO:0000270"/>
    <property type="project" value="EcoCyc"/>
</dbReference>
<dbReference type="GO" id="GO:0005992">
    <property type="term" value="P:trehalose biosynthetic process"/>
    <property type="evidence" value="ECO:0000315"/>
    <property type="project" value="EcoCyc"/>
</dbReference>
<dbReference type="CDD" id="cd01627">
    <property type="entry name" value="HAD_TPP"/>
    <property type="match status" value="1"/>
</dbReference>
<dbReference type="Gene3D" id="3.40.50.1000">
    <property type="entry name" value="HAD superfamily/HAD-like"/>
    <property type="match status" value="1"/>
</dbReference>
<dbReference type="Gene3D" id="3.30.70.1020">
    <property type="entry name" value="Trehalose-6-phosphate phosphatase related protein, domain 2"/>
    <property type="match status" value="1"/>
</dbReference>
<dbReference type="InterPro" id="IPR036412">
    <property type="entry name" value="HAD-like_sf"/>
</dbReference>
<dbReference type="InterPro" id="IPR006379">
    <property type="entry name" value="HAD-SF_hydro_IIB"/>
</dbReference>
<dbReference type="InterPro" id="IPR023214">
    <property type="entry name" value="HAD_sf"/>
</dbReference>
<dbReference type="InterPro" id="IPR044651">
    <property type="entry name" value="OTSB-like"/>
</dbReference>
<dbReference type="InterPro" id="IPR003337">
    <property type="entry name" value="Trehalose_PPase"/>
</dbReference>
<dbReference type="NCBIfam" id="TIGR01484">
    <property type="entry name" value="HAD-SF-IIB"/>
    <property type="match status" value="1"/>
</dbReference>
<dbReference type="NCBIfam" id="NF007560">
    <property type="entry name" value="PRK10187.1"/>
    <property type="match status" value="1"/>
</dbReference>
<dbReference type="NCBIfam" id="TIGR00685">
    <property type="entry name" value="T6PP"/>
    <property type="match status" value="1"/>
</dbReference>
<dbReference type="PANTHER" id="PTHR43768">
    <property type="entry name" value="TREHALOSE 6-PHOSPHATE PHOSPHATASE"/>
    <property type="match status" value="1"/>
</dbReference>
<dbReference type="PANTHER" id="PTHR43768:SF3">
    <property type="entry name" value="TREHALOSE 6-PHOSPHATE PHOSPHATASE"/>
    <property type="match status" value="1"/>
</dbReference>
<dbReference type="Pfam" id="PF02358">
    <property type="entry name" value="Trehalose_PPase"/>
    <property type="match status" value="1"/>
</dbReference>
<dbReference type="SUPFAM" id="SSF56784">
    <property type="entry name" value="HAD-like"/>
    <property type="match status" value="1"/>
</dbReference>
<gene>
    <name type="primary">otsB</name>
    <name type="ordered locus">b1897</name>
    <name type="ordered locus">JW1886</name>
</gene>
<protein>
    <recommendedName>
        <fullName>Trehalose-6-phosphate phosphatase</fullName>
        <shortName>TPP</shortName>
        <ecNumber evidence="4">3.1.3.12</ecNumber>
    </recommendedName>
    <alternativeName>
        <fullName>Osmoregulatory trehalose synthesis protein B</fullName>
    </alternativeName>
    <alternativeName>
        <fullName>Trehalose 6-phosphate phosphatase</fullName>
    </alternativeName>
    <alternativeName>
        <fullName>Trehalose-phosphatase</fullName>
    </alternativeName>
</protein>
<reference key="1">
    <citation type="journal article" date="1994" name="Gene">
        <title>Analysis of the otsBA operon for osmoregulatory trehalose synthesis in Escherichia coli and homology of the OtsA and OtsB proteins to the yeast trehalose-6-phosphate synthase/phosphatase complex.</title>
        <authorList>
            <person name="Kaasen I."/>
            <person name="McDougall J."/>
            <person name="Stroem A.R."/>
        </authorList>
    </citation>
    <scope>NUCLEOTIDE SEQUENCE [GENOMIC DNA]</scope>
    <scope>PARTIAL PROTEIN SEQUENCE</scope>
    <source>
        <strain>K12 / CSH7</strain>
    </source>
</reference>
<reference key="2">
    <citation type="journal article" date="1996" name="DNA Res.">
        <title>A 460-kb DNA sequence of the Escherichia coli K-12 genome corresponding to the 40.1-50.0 min region on the linkage map.</title>
        <authorList>
            <person name="Itoh T."/>
            <person name="Aiba H."/>
            <person name="Baba T."/>
            <person name="Fujita K."/>
            <person name="Hayashi K."/>
            <person name="Inada T."/>
            <person name="Isono K."/>
            <person name="Kasai H."/>
            <person name="Kimura S."/>
            <person name="Kitakawa M."/>
            <person name="Kitagawa M."/>
            <person name="Makino K."/>
            <person name="Miki T."/>
            <person name="Mizobuchi K."/>
            <person name="Mori H."/>
            <person name="Mori T."/>
            <person name="Motomura K."/>
            <person name="Nakade S."/>
            <person name="Nakamura Y."/>
            <person name="Nashimoto H."/>
            <person name="Nishio Y."/>
            <person name="Oshima T."/>
            <person name="Saito N."/>
            <person name="Sampei G."/>
            <person name="Seki Y."/>
            <person name="Sivasundaram S."/>
            <person name="Tagami H."/>
            <person name="Takeda J."/>
            <person name="Takemoto K."/>
            <person name="Wada C."/>
            <person name="Yamamoto Y."/>
            <person name="Horiuchi T."/>
        </authorList>
    </citation>
    <scope>NUCLEOTIDE SEQUENCE [LARGE SCALE GENOMIC DNA]</scope>
    <source>
        <strain>K12 / W3110 / ATCC 27325 / DSM 5911</strain>
    </source>
</reference>
<reference key="3">
    <citation type="journal article" date="1997" name="Science">
        <title>The complete genome sequence of Escherichia coli K-12.</title>
        <authorList>
            <person name="Blattner F.R."/>
            <person name="Plunkett G. III"/>
            <person name="Bloch C.A."/>
            <person name="Perna N.T."/>
            <person name="Burland V."/>
            <person name="Riley M."/>
            <person name="Collado-Vides J."/>
            <person name="Glasner J.D."/>
            <person name="Rode C.K."/>
            <person name="Mayhew G.F."/>
            <person name="Gregor J."/>
            <person name="Davis N.W."/>
            <person name="Kirkpatrick H.A."/>
            <person name="Goeden M.A."/>
            <person name="Rose D.J."/>
            <person name="Mau B."/>
            <person name="Shao Y."/>
        </authorList>
    </citation>
    <scope>NUCLEOTIDE SEQUENCE [LARGE SCALE GENOMIC DNA]</scope>
    <source>
        <strain>K12 / MG1655 / ATCC 47076</strain>
    </source>
</reference>
<reference key="4">
    <citation type="journal article" date="2006" name="Mol. Syst. Biol.">
        <title>Highly accurate genome sequences of Escherichia coli K-12 strains MG1655 and W3110.</title>
        <authorList>
            <person name="Hayashi K."/>
            <person name="Morooka N."/>
            <person name="Yamamoto Y."/>
            <person name="Fujita K."/>
            <person name="Isono K."/>
            <person name="Choi S."/>
            <person name="Ohtsubo E."/>
            <person name="Baba T."/>
            <person name="Wanner B.L."/>
            <person name="Mori H."/>
            <person name="Horiuchi T."/>
        </authorList>
    </citation>
    <scope>NUCLEOTIDE SEQUENCE [LARGE SCALE GENOMIC DNA]</scope>
    <source>
        <strain>K12 / W3110 / ATCC 27325 / DSM 5911</strain>
    </source>
</reference>
<reference key="5">
    <citation type="journal article" date="1988" name="J. Bacteriol.">
        <title>Biochemical and genetic characterization of osmoregulatory trehalose synthesis in Escherichia coli.</title>
        <authorList>
            <person name="Giaever H.M."/>
            <person name="Styrvold O.B."/>
            <person name="Kaasen I."/>
            <person name="Stroem A.R."/>
        </authorList>
    </citation>
    <scope>INDUCTION</scope>
    <scope>NOMENCLATURE</scope>
</reference>
<reference key="6">
    <citation type="journal article" date="1991" name="J. Bacteriol.">
        <title>Trehalose synthesis genes are controlled by the putative sigma factor encoded by rpoS and are involved in stationary-phase thermotolerance in Escherichia coli.</title>
        <authorList>
            <person name="Hengge-Aronis R."/>
            <person name="Klein W."/>
            <person name="Lange R."/>
            <person name="Rimmele M."/>
            <person name="Boos W."/>
        </authorList>
    </citation>
    <scope>INDUCTION</scope>
</reference>
<reference key="7">
    <citation type="journal article" date="1992" name="J. Bacteriol.">
        <title>Molecular cloning and physical mapping of the otsBA genes, which encode the osmoregulatory trehalose pathway of Escherichia coli: evidence that transcription is activated by katF (AppR).</title>
        <authorList>
            <person name="Kaasen I."/>
            <person name="Falkenberg P."/>
            <person name="Styrvold O.B."/>
            <person name="Strom A.R."/>
        </authorList>
    </citation>
    <scope>FUNCTION AS A TREHALOSE-PHOSPHATE PHOSPHATASE</scope>
    <scope>INDUCTION</scope>
</reference>
<reference key="8">
    <citation type="journal article" date="2002" name="Proc. Natl. Acad. Sci. U.S.A.">
        <title>Trehalose synthesis is induced upon exposure of Escherichia coli to cold and is essential for viability at low temperatures.</title>
        <authorList>
            <person name="Kandror O."/>
            <person name="DeLeon A."/>
            <person name="Goldberg A.L."/>
        </authorList>
    </citation>
    <scope>INDUCTION</scope>
    <source>
        <strain>K12 / MC4100 / ATCC 35695 / DSM 6574</strain>
    </source>
</reference>
<reference key="9">
    <citation type="journal article" date="2006" name="J. Bacteriol.">
        <title>Time-dependent proteome alterations under osmotic stress during aerobic and anaerobic growth in Escherichia coli.</title>
        <authorList>
            <person name="Weber A."/>
            <person name="Kogl S.A."/>
            <person name="Jung K."/>
        </authorList>
    </citation>
    <scope>INDUCTION</scope>
</reference>
<reference key="10">
    <citation type="journal article" date="2006" name="J. Biol. Chem.">
        <title>Genome-wide analysis of substrate specificities of the Escherichia coli haloacid dehalogenase-like phosphatase family.</title>
        <authorList>
            <person name="Kuznetsova E."/>
            <person name="Proudfoot M."/>
            <person name="Gonzalez C.F."/>
            <person name="Brown G."/>
            <person name="Omelchenko M.V."/>
            <person name="Borozan I."/>
            <person name="Carmel L."/>
            <person name="Wolf Y.I."/>
            <person name="Mori H."/>
            <person name="Savchenko A.V."/>
            <person name="Arrowsmith C.H."/>
            <person name="Koonin E.V."/>
            <person name="Edwards A.M."/>
            <person name="Yakunin A.F."/>
        </authorList>
    </citation>
    <scope>FUNCTION AS A PHOSPHATASE</scope>
    <scope>CATALYTIC ACTIVITY</scope>
    <scope>BIOPHYSICOCHEMICAL PROPERTIES</scope>
    <scope>SUBSTRATE SPECIFICITY</scope>
    <scope>COFACTOR</scope>
</reference>
<name>OTSB_ECOLI</name>
<keyword id="KW-0903">Direct protein sequencing</keyword>
<keyword id="KW-0378">Hydrolase</keyword>
<keyword id="KW-0460">Magnesium</keyword>
<keyword id="KW-0479">Metal-binding</keyword>
<keyword id="KW-1185">Reference proteome</keyword>